<sequence>MASNNYIQIMEKAPKYQTAYACEGKKLTIECEQGELINLIRANYGRFSITICNDHGNVEWSVNCMFPKSLTVLNSRCAHKNSCSVLAATSMFGDPCPGTHKYLEAHYQCVSAAQTSTTTNRPSPPPWVLNNGPPIFGNGSGLIHPTNIGGGSGGASAPPRLPTLPGVVGINGNGGMFNIPPPATHATPPGSTATLPGGRLKGVATSTTTTKHPAGRRDGLPPPPQLHHHHNHHTDETTPTKPSGKVPAASNATAPSNTRILTGVGGGGTDDGTLLTTKSSPNRTPGTAASGPSVSSNGSAVRTINNINLNAAGMAGADDETKLFCGPTHARNLFWNMTRVGDVNVQPCPGGAAGIAKWRCVLMKRMPDSSFDEDDEEMAGTSTTTPMSTSSDCLYNSSSCEPPVTMAHKVNQRLRNFEPTWHPLTPDLTQCRSLWLNNLEMRVNQRDSSLISIANDMSEVTSSKTLYGGDMLVTTKIIQTVSEKMLHDKETFPDQRQREAMIMELLHCVVKTGSNLLDESQLSSWLDLNPEDQMRVATSLLTGLEYNAFLLADTIIRERSVVQKVKNILLSVRVLETKTIQSSVVFPDSDQWPISSDRIELPRAALIENSEGGLVRIVFAAFDRLESILKPSYDHFDLKSSRSYVRNTAILTNDSDASAGDLQQRLRILNSKVISASLGKGRHIQLSQPITLTLKHLKTENVTNPTCVFWNYIDHAWSANGCSLESTNRTHSVCSCNHLTNFAILMDVVDEHQHSLFTMFDGNMRIFIYISIAICVVFIVIALLTLKLFNGVFVKSARTSIYINIYICLLAIELLFLLGIEQTETSIFCGFITVFLHCAILSGTSWFCYEAFHSYSTLTSDELLLEVDQTPKVNCYYLLSYGLSLSVVAISLVINPSTYTQNDYCVLMEANAVFYATFVAPVLIFFMAAIGYTFLSWIIMCRKSRTGLKTKEHTRLATVRFDIRCSFVFFLLLSAVWCSAYFYLRGAKMDEDVTGIYGYNFICFNTLLGLYIFVFHCIQNEKIRREYRKYVRQHAWLPKCLRCSKTSISSGIVAGGGTGLGGTNAGTLCSVSTAKKSKLPLGTNDDAHDEQQQQQHMSATEDAIMGASSDCELNEAQQRRTLKSGLITGTLQPSQSLGGHVVLERGNTLRSTGHASPTSSAGSTHLIFAHKPQQQQPPLGEAYYHQPDYYSWKQTAGGMKAQREYYNNAGAATSSPQQAHEVFYWTQKPNSQHGKKKRGGVGAIPASPSGSLHSRATAASQVLFYPSYKKTKPGQQAHPHYAEALDPPQPPNTAAYYQQQQQLRQQRQQQQQQLSSDEEQAEQHAHLLHLQHQQQQQQQRRAGGQQQLPAPPPHMAQYQQEFMQRQYRNKHSNCDLGDAYYNQGSVGGADGGPVYEEILSNRNSDAQHYEVGDFDVDEVYNNSVGTGVFNNMRAAVAAGGSRYGGSLSGGSVSSRNQQQQQHSLAQPISARRCTADEDDDEDEDDEETTAAEQLHDGVCDEEEEDEESDMEDDSHGLPPQSAERMRRLMALQDEDFKRRFQRQQRKHGAPVDYGTLPPGSAQAVIGGAHPEHNGAVFGVSGGVGEGSMRGALRQQHAKSPSARLAVNELFGHGNTGPPLPPANQTPAQKRQQLQKLSPQSTTSSSSHTSHSNPHSHPPHHQQRHLSAMLDENNTVRCYLEPLAK</sequence>
<name>LPHN_DROPE</name>
<accession>B4GD14</accession>
<dbReference type="EMBL" id="CH479181">
    <property type="protein sequence ID" value="EDW31552.1"/>
    <property type="molecule type" value="Genomic_DNA"/>
</dbReference>
<dbReference type="RefSeq" id="XP_002015662.1">
    <property type="nucleotide sequence ID" value="XM_002015626.1"/>
</dbReference>
<dbReference type="SMR" id="B4GD14"/>
<dbReference type="STRING" id="7234.B4GD14"/>
<dbReference type="MEROPS" id="P02.A01"/>
<dbReference type="GlyCosmos" id="B4GD14">
    <property type="glycosylation" value="8 sites, No reported glycans"/>
</dbReference>
<dbReference type="EnsemblMetazoa" id="FBtr0176519">
    <property type="protein sequence ID" value="FBpp0175011"/>
    <property type="gene ID" value="FBgn0148514"/>
</dbReference>
<dbReference type="EnsemblMetazoa" id="XM_026986795.1">
    <property type="protein sequence ID" value="XP_026842596.1"/>
    <property type="gene ID" value="LOC6590106"/>
</dbReference>
<dbReference type="eggNOG" id="KOG4193">
    <property type="taxonomic scope" value="Eukaryota"/>
</dbReference>
<dbReference type="eggNOG" id="KOG4729">
    <property type="taxonomic scope" value="Eukaryota"/>
</dbReference>
<dbReference type="HOGENOM" id="CLU_003272_0_0_1"/>
<dbReference type="OMA" id="NMRVFIY"/>
<dbReference type="OrthoDB" id="1100386at2759"/>
<dbReference type="PhylomeDB" id="B4GD14"/>
<dbReference type="ChiTaRS" id="Cirl">
    <property type="organism name" value="fly"/>
</dbReference>
<dbReference type="Proteomes" id="UP000008744">
    <property type="component" value="Unassembled WGS sequence"/>
</dbReference>
<dbReference type="GO" id="GO:0005886">
    <property type="term" value="C:plasma membrane"/>
    <property type="evidence" value="ECO:0007669"/>
    <property type="project" value="UniProtKB-SubCell"/>
</dbReference>
<dbReference type="GO" id="GO:0030246">
    <property type="term" value="F:carbohydrate binding"/>
    <property type="evidence" value="ECO:0007669"/>
    <property type="project" value="UniProtKB-KW"/>
</dbReference>
<dbReference type="GO" id="GO:0004930">
    <property type="term" value="F:G protein-coupled receptor activity"/>
    <property type="evidence" value="ECO:0007669"/>
    <property type="project" value="UniProtKB-KW"/>
</dbReference>
<dbReference type="GO" id="GO:0007166">
    <property type="term" value="P:cell surface receptor signaling pathway"/>
    <property type="evidence" value="ECO:0007669"/>
    <property type="project" value="InterPro"/>
</dbReference>
<dbReference type="CDD" id="cd22830">
    <property type="entry name" value="Gal_Rha_Lectin_dCirl"/>
    <property type="match status" value="1"/>
</dbReference>
<dbReference type="FunFam" id="2.60.120.740:FF:000001">
    <property type="entry name" value="Adhesion G protein-coupled receptor L2"/>
    <property type="match status" value="1"/>
</dbReference>
<dbReference type="FunFam" id="1.20.1070.10:FF:000322">
    <property type="entry name" value="latrophilin Cirl isoform X2"/>
    <property type="match status" value="1"/>
</dbReference>
<dbReference type="FunFam" id="1.25.40.610:FF:000006">
    <property type="entry name" value="latrophilin Cirl isoform X2"/>
    <property type="match status" value="1"/>
</dbReference>
<dbReference type="FunFam" id="2.60.220.50:FF:000024">
    <property type="entry name" value="latrophilin Cirl isoform X2"/>
    <property type="match status" value="1"/>
</dbReference>
<dbReference type="Gene3D" id="1.25.40.610">
    <property type="match status" value="1"/>
</dbReference>
<dbReference type="Gene3D" id="2.60.120.740">
    <property type="match status" value="1"/>
</dbReference>
<dbReference type="Gene3D" id="2.60.220.50">
    <property type="match status" value="1"/>
</dbReference>
<dbReference type="Gene3D" id="4.10.1240.10">
    <property type="entry name" value="GPCR, family 2, extracellular hormone receptor domain"/>
    <property type="match status" value="1"/>
</dbReference>
<dbReference type="Gene3D" id="1.20.1070.10">
    <property type="entry name" value="Rhodopsin 7-helix transmembrane proteins"/>
    <property type="match status" value="1"/>
</dbReference>
<dbReference type="InterPro" id="IPR057244">
    <property type="entry name" value="GAIN_B"/>
</dbReference>
<dbReference type="InterPro" id="IPR032471">
    <property type="entry name" value="GAIN_dom_N"/>
</dbReference>
<dbReference type="InterPro" id="IPR046338">
    <property type="entry name" value="GAIN_dom_sf"/>
</dbReference>
<dbReference type="InterPro" id="IPR017981">
    <property type="entry name" value="GPCR_2-like_7TM"/>
</dbReference>
<dbReference type="InterPro" id="IPR036445">
    <property type="entry name" value="GPCR_2_extracell_dom_sf"/>
</dbReference>
<dbReference type="InterPro" id="IPR000832">
    <property type="entry name" value="GPCR_2_secretin-like"/>
</dbReference>
<dbReference type="InterPro" id="IPR000203">
    <property type="entry name" value="GPS"/>
</dbReference>
<dbReference type="InterPro" id="IPR000922">
    <property type="entry name" value="Lectin_gal-bd_dom"/>
</dbReference>
<dbReference type="InterPro" id="IPR043159">
    <property type="entry name" value="Lectin_gal-bd_sf"/>
</dbReference>
<dbReference type="PANTHER" id="PTHR12011">
    <property type="entry name" value="ADHESION G-PROTEIN COUPLED RECEPTOR"/>
    <property type="match status" value="1"/>
</dbReference>
<dbReference type="PANTHER" id="PTHR12011:SF475">
    <property type="entry name" value="LATROPHILIN CIRL"/>
    <property type="match status" value="1"/>
</dbReference>
<dbReference type="Pfam" id="PF00002">
    <property type="entry name" value="7tm_2"/>
    <property type="match status" value="1"/>
</dbReference>
<dbReference type="Pfam" id="PF16489">
    <property type="entry name" value="GAIN"/>
    <property type="match status" value="1"/>
</dbReference>
<dbReference type="Pfam" id="PF01825">
    <property type="entry name" value="GPS"/>
    <property type="match status" value="1"/>
</dbReference>
<dbReference type="Pfam" id="PF02140">
    <property type="entry name" value="SUEL_Lectin"/>
    <property type="match status" value="1"/>
</dbReference>
<dbReference type="SMART" id="SM00303">
    <property type="entry name" value="GPS"/>
    <property type="match status" value="1"/>
</dbReference>
<dbReference type="SUPFAM" id="SSF81321">
    <property type="entry name" value="Family A G protein-coupled receptor-like"/>
    <property type="match status" value="1"/>
</dbReference>
<dbReference type="PROSITE" id="PS50261">
    <property type="entry name" value="G_PROTEIN_RECEP_F2_4"/>
    <property type="match status" value="1"/>
</dbReference>
<dbReference type="PROSITE" id="PS50221">
    <property type="entry name" value="GAIN_B"/>
    <property type="match status" value="1"/>
</dbReference>
<dbReference type="PROSITE" id="PS50228">
    <property type="entry name" value="SUEL_LECTIN"/>
    <property type="match status" value="1"/>
</dbReference>
<protein>
    <recommendedName>
        <fullName evidence="1">Latrophilin Cirl</fullName>
    </recommendedName>
</protein>
<gene>
    <name evidence="1" type="primary">Cirl</name>
    <name type="ORF">GL10904</name>
</gene>
<feature type="chain" id="PRO_0000393377" description="Latrophilin Cirl">
    <location>
        <begin position="1"/>
        <end position="1684"/>
    </location>
</feature>
<feature type="topological domain" description="Extracellular" evidence="3">
    <location>
        <begin position="1"/>
        <end position="765"/>
    </location>
</feature>
<feature type="transmembrane region" description="Helical; Name=1" evidence="3">
    <location>
        <begin position="766"/>
        <end position="786"/>
    </location>
</feature>
<feature type="topological domain" description="Cytoplasmic" evidence="3">
    <location>
        <begin position="787"/>
        <end position="799"/>
    </location>
</feature>
<feature type="transmembrane region" description="Helical; Name=2" evidence="3">
    <location>
        <begin position="800"/>
        <end position="820"/>
    </location>
</feature>
<feature type="topological domain" description="Extracellular" evidence="3">
    <location>
        <begin position="821"/>
        <end position="826"/>
    </location>
</feature>
<feature type="transmembrane region" description="Helical; Name=3" evidence="3">
    <location>
        <begin position="827"/>
        <end position="847"/>
    </location>
</feature>
<feature type="topological domain" description="Cytoplasmic" evidence="3">
    <location>
        <begin position="848"/>
        <end position="873"/>
    </location>
</feature>
<feature type="transmembrane region" description="Helical; Name=4" evidence="3">
    <location>
        <begin position="874"/>
        <end position="894"/>
    </location>
</feature>
<feature type="topological domain" description="Extracellular" evidence="3">
    <location>
        <begin position="895"/>
        <end position="918"/>
    </location>
</feature>
<feature type="transmembrane region" description="Helical; Name=5" evidence="3">
    <location>
        <begin position="919"/>
        <end position="939"/>
    </location>
</feature>
<feature type="topological domain" description="Cytoplasmic" evidence="3">
    <location>
        <begin position="940"/>
        <end position="966"/>
    </location>
</feature>
<feature type="transmembrane region" description="Helical; Name=6" evidence="3">
    <location>
        <begin position="967"/>
        <end position="987"/>
    </location>
</feature>
<feature type="topological domain" description="Extracellular" evidence="3">
    <location>
        <begin position="988"/>
        <end position="994"/>
    </location>
</feature>
<feature type="transmembrane region" description="Helical; Name=7" evidence="3">
    <location>
        <begin position="995"/>
        <end position="1015"/>
    </location>
</feature>
<feature type="topological domain" description="Cytoplasmic" evidence="3">
    <location>
        <begin position="1016"/>
        <end position="1684"/>
    </location>
</feature>
<feature type="domain" description="SUEL-type lectin" evidence="5">
    <location>
        <begin position="21"/>
        <end position="110"/>
    </location>
</feature>
<feature type="domain" description="GAIN-B" evidence="4">
    <location>
        <begin position="559"/>
        <end position="752"/>
    </location>
</feature>
<feature type="region of interest" description="Disordered" evidence="6">
    <location>
        <begin position="181"/>
        <end position="300"/>
    </location>
</feature>
<feature type="region of interest" description="Disordered" evidence="6">
    <location>
        <begin position="370"/>
        <end position="391"/>
    </location>
</feature>
<feature type="region of interest" description="GPS" evidence="4">
    <location>
        <begin position="707"/>
        <end position="752"/>
    </location>
</feature>
<feature type="region of interest" description="Disordered" evidence="6">
    <location>
        <begin position="1080"/>
        <end position="1100"/>
    </location>
</feature>
<feature type="region of interest" description="Disordered" evidence="6">
    <location>
        <begin position="1228"/>
        <end position="1255"/>
    </location>
</feature>
<feature type="region of interest" description="Disordered" evidence="6">
    <location>
        <begin position="1270"/>
        <end position="1353"/>
    </location>
</feature>
<feature type="region of interest" description="Disordered" evidence="6">
    <location>
        <begin position="1441"/>
        <end position="1520"/>
    </location>
</feature>
<feature type="region of interest" description="Disordered" evidence="6">
    <location>
        <begin position="1587"/>
        <end position="1669"/>
    </location>
</feature>
<feature type="compositionally biased region" description="Polar residues" evidence="6">
    <location>
        <begin position="250"/>
        <end position="260"/>
    </location>
</feature>
<feature type="compositionally biased region" description="Polar residues" evidence="6">
    <location>
        <begin position="278"/>
        <end position="300"/>
    </location>
</feature>
<feature type="compositionally biased region" description="Low complexity" evidence="6">
    <location>
        <begin position="381"/>
        <end position="391"/>
    </location>
</feature>
<feature type="compositionally biased region" description="Low complexity" evidence="6">
    <location>
        <begin position="1298"/>
        <end position="1314"/>
    </location>
</feature>
<feature type="compositionally biased region" description="Low complexity" evidence="6">
    <location>
        <begin position="1328"/>
        <end position="1348"/>
    </location>
</feature>
<feature type="compositionally biased region" description="Polar residues" evidence="6">
    <location>
        <begin position="1455"/>
        <end position="1466"/>
    </location>
</feature>
<feature type="compositionally biased region" description="Acidic residues" evidence="6">
    <location>
        <begin position="1476"/>
        <end position="1489"/>
    </location>
</feature>
<feature type="compositionally biased region" description="Acidic residues" evidence="6">
    <location>
        <begin position="1499"/>
        <end position="1512"/>
    </location>
</feature>
<feature type="compositionally biased region" description="Low complexity" evidence="6">
    <location>
        <begin position="1631"/>
        <end position="1654"/>
    </location>
</feature>
<feature type="site" description="Cleavage; by autolysis" evidence="4">
    <location>
        <begin position="739"/>
        <end position="740"/>
    </location>
</feature>
<feature type="modified residue" description="Phosphoserine" evidence="1">
    <location>
        <position position="1156"/>
    </location>
</feature>
<feature type="modified residue" description="Phosphoserine" evidence="1">
    <location>
        <position position="1247"/>
    </location>
</feature>
<feature type="modified residue" description="Phosphoserine" evidence="1">
    <location>
        <position position="1254"/>
    </location>
</feature>
<feature type="modified residue" description="Phosphoserine" evidence="1">
    <location>
        <position position="1315"/>
    </location>
</feature>
<feature type="modified residue" description="Phosphoserine" evidence="1">
    <location>
        <position position="1316"/>
    </location>
</feature>
<feature type="glycosylation site" description="N-linked (GlcNAc...) asparagine" evidence="3">
    <location>
        <position position="138"/>
    </location>
</feature>
<feature type="glycosylation site" description="N-linked (GlcNAc...) asparagine" evidence="3">
    <location>
        <position position="251"/>
    </location>
</feature>
<feature type="glycosylation site" description="N-linked (GlcNAc...) asparagine" evidence="3">
    <location>
        <position position="297"/>
    </location>
</feature>
<feature type="glycosylation site" description="N-linked (GlcNAc...) asparagine" evidence="3">
    <location>
        <position position="336"/>
    </location>
</feature>
<feature type="glycosylation site" description="N-linked (GlcNAc...) asparagine" evidence="3">
    <location>
        <position position="396"/>
    </location>
</feature>
<feature type="glycosylation site" description="N-linked (GlcNAc...) asparagine" evidence="3">
    <location>
        <position position="653"/>
    </location>
</feature>
<feature type="glycosylation site" description="N-linked (GlcNAc...) asparagine" evidence="3">
    <location>
        <position position="701"/>
    </location>
</feature>
<feature type="glycosylation site" description="N-linked (GlcNAc...) asparagine" evidence="3">
    <location>
        <position position="728"/>
    </location>
</feature>
<feature type="disulfide bond" evidence="4">
    <location>
        <begin position="707"/>
        <end position="734"/>
    </location>
</feature>
<feature type="disulfide bond" evidence="4">
    <location>
        <begin position="722"/>
        <end position="736"/>
    </location>
</feature>
<evidence type="ECO:0000250" key="1">
    <source>
        <dbReference type="UniProtKB" id="A1Z7G7"/>
    </source>
</evidence>
<evidence type="ECO:0000250" key="2">
    <source>
        <dbReference type="UniProtKB" id="O88923"/>
    </source>
</evidence>
<evidence type="ECO:0000255" key="3"/>
<evidence type="ECO:0000255" key="4">
    <source>
        <dbReference type="PROSITE-ProRule" id="PRU00098"/>
    </source>
</evidence>
<evidence type="ECO:0000255" key="5">
    <source>
        <dbReference type="PROSITE-ProRule" id="PRU00260"/>
    </source>
</evidence>
<evidence type="ECO:0000256" key="6">
    <source>
        <dbReference type="SAM" id="MobiDB-lite"/>
    </source>
</evidence>
<evidence type="ECO:0000312" key="7">
    <source>
        <dbReference type="EMBL" id="EDW31552.1"/>
    </source>
</evidence>
<proteinExistence type="inferred from homology"/>
<keyword id="KW-1003">Cell membrane</keyword>
<keyword id="KW-1015">Disulfide bond</keyword>
<keyword id="KW-0297">G-protein coupled receptor</keyword>
<keyword id="KW-0325">Glycoprotein</keyword>
<keyword id="KW-0430">Lectin</keyword>
<keyword id="KW-0472">Membrane</keyword>
<keyword id="KW-0597">Phosphoprotein</keyword>
<keyword id="KW-0675">Receptor</keyword>
<keyword id="KW-1185">Reference proteome</keyword>
<keyword id="KW-0807">Transducer</keyword>
<keyword id="KW-0812">Transmembrane</keyword>
<keyword id="KW-1133">Transmembrane helix</keyword>
<organism>
    <name type="scientific">Drosophila persimilis</name>
    <name type="common">Fruit fly</name>
    <dbReference type="NCBI Taxonomy" id="7234"/>
    <lineage>
        <taxon>Eukaryota</taxon>
        <taxon>Metazoa</taxon>
        <taxon>Ecdysozoa</taxon>
        <taxon>Arthropoda</taxon>
        <taxon>Hexapoda</taxon>
        <taxon>Insecta</taxon>
        <taxon>Pterygota</taxon>
        <taxon>Neoptera</taxon>
        <taxon>Endopterygota</taxon>
        <taxon>Diptera</taxon>
        <taxon>Brachycera</taxon>
        <taxon>Muscomorpha</taxon>
        <taxon>Ephydroidea</taxon>
        <taxon>Drosophilidae</taxon>
        <taxon>Drosophila</taxon>
        <taxon>Sophophora</taxon>
    </lineage>
</organism>
<comment type="subunit">
    <text evidence="2">Forms a heterodimer, consisting of a large extracellular region non-covalently linked to a seven-transmembrane moiety.</text>
</comment>
<comment type="subcellular location">
    <subcellularLocation>
        <location evidence="3">Cell membrane</location>
        <topology evidence="2 3">Multi-pass membrane protein</topology>
    </subcellularLocation>
</comment>
<comment type="PTM">
    <text evidence="2">Proteolytically cleaved into 2 subunits, an extracellular subunit and a seven-transmembrane subunit.</text>
</comment>
<comment type="similarity">
    <text evidence="3">Belongs to the G-protein coupled receptor 2 family. LN-TM7 subfamily.</text>
</comment>
<reference evidence="7" key="1">
    <citation type="journal article" date="2007" name="Nature">
        <title>Evolution of genes and genomes on the Drosophila phylogeny.</title>
        <authorList>
            <consortium name="Drosophila 12 genomes consortium"/>
        </authorList>
    </citation>
    <scope>NUCLEOTIDE SEQUENCE [LARGE SCALE GENOMIC DNA]</scope>
    <source>
        <strain evidence="7">MSH-3 / Tucson 14011-0111.49</strain>
    </source>
</reference>